<comment type="function">
    <text evidence="1">NDH-1 shuttles electrons from NADH, via FMN and iron-sulfur (Fe-S) centers, to quinones in the respiratory chain. The immediate electron acceptor for the enzyme in this species is believed to be ubiquinone. Couples the redox reaction to proton translocation (for every two electrons transferred, four hydrogen ions are translocated across the cytoplasmic membrane), and thus conserves the redox energy in a proton gradient. This subunit may bind ubiquinone.</text>
</comment>
<comment type="catalytic activity">
    <reaction evidence="1">
        <text>a quinone + NADH + 5 H(+)(in) = a quinol + NAD(+) + 4 H(+)(out)</text>
        <dbReference type="Rhea" id="RHEA:57888"/>
        <dbReference type="ChEBI" id="CHEBI:15378"/>
        <dbReference type="ChEBI" id="CHEBI:24646"/>
        <dbReference type="ChEBI" id="CHEBI:57540"/>
        <dbReference type="ChEBI" id="CHEBI:57945"/>
        <dbReference type="ChEBI" id="CHEBI:132124"/>
    </reaction>
</comment>
<comment type="subunit">
    <text evidence="1">NDH-1 is composed of 13 different subunits. Subunits NuoA, H, J, K, L, M, N constitute the membrane sector of the complex.</text>
</comment>
<comment type="subcellular location">
    <subcellularLocation>
        <location evidence="1">Cell inner membrane</location>
        <topology evidence="1">Multi-pass membrane protein</topology>
    </subcellularLocation>
</comment>
<comment type="similarity">
    <text evidence="1">Belongs to the complex I subunit 1 family.</text>
</comment>
<keyword id="KW-0997">Cell inner membrane</keyword>
<keyword id="KW-1003">Cell membrane</keyword>
<keyword id="KW-0472">Membrane</keyword>
<keyword id="KW-0520">NAD</keyword>
<keyword id="KW-0874">Quinone</keyword>
<keyword id="KW-1278">Translocase</keyword>
<keyword id="KW-0812">Transmembrane</keyword>
<keyword id="KW-1133">Transmembrane helix</keyword>
<keyword id="KW-0830">Ubiquinone</keyword>
<reference key="1">
    <citation type="journal article" date="2010" name="PLoS Genet.">
        <title>Genome sequence of the plant growth promoting endophytic bacterium Enterobacter sp. 638.</title>
        <authorList>
            <person name="Taghavi S."/>
            <person name="van der Lelie D."/>
            <person name="Hoffman A."/>
            <person name="Zhang Y.B."/>
            <person name="Walla M.D."/>
            <person name="Vangronsveld J."/>
            <person name="Newman L."/>
            <person name="Monchy S."/>
        </authorList>
    </citation>
    <scope>NUCLEOTIDE SEQUENCE [LARGE SCALE GENOMIC DNA]</scope>
    <source>
        <strain>638</strain>
    </source>
</reference>
<gene>
    <name evidence="1" type="primary">nuoH</name>
    <name type="ordered locus">Ent638_2826</name>
</gene>
<feature type="chain" id="PRO_1000067743" description="NADH-quinone oxidoreductase subunit H">
    <location>
        <begin position="1"/>
        <end position="325"/>
    </location>
</feature>
<feature type="transmembrane region" description="Helical" evidence="1">
    <location>
        <begin position="11"/>
        <end position="31"/>
    </location>
</feature>
<feature type="transmembrane region" description="Helical" evidence="1">
    <location>
        <begin position="81"/>
        <end position="101"/>
    </location>
</feature>
<feature type="transmembrane region" description="Helical" evidence="1">
    <location>
        <begin position="114"/>
        <end position="134"/>
    </location>
</feature>
<feature type="transmembrane region" description="Helical" evidence="1">
    <location>
        <begin position="154"/>
        <end position="174"/>
    </location>
</feature>
<feature type="transmembrane region" description="Helical" evidence="1">
    <location>
        <begin position="186"/>
        <end position="206"/>
    </location>
</feature>
<feature type="transmembrane region" description="Helical" evidence="1">
    <location>
        <begin position="237"/>
        <end position="257"/>
    </location>
</feature>
<feature type="transmembrane region" description="Helical" evidence="1">
    <location>
        <begin position="265"/>
        <end position="285"/>
    </location>
</feature>
<feature type="transmembrane region" description="Helical" evidence="1">
    <location>
        <begin position="304"/>
        <end position="324"/>
    </location>
</feature>
<sequence length="325" mass="36255">MSWLTPDLIDILLSILKAVVILLVVVTCGAFMSFGERRLLGLFQNRYGPNRVGWGGSLQLVADMIKMFFKEDWIPKFSDRVIFTLAPMIAFTSLLLAFAIVPVSPTWVVADLNIGILFFLMMAGLAVYAVLFAGWSSNNKYSLLGAMRASAQTLSYEVFLGLSLMGVVAQAGSFNMTDIVNNQADIWNVIPQFFGFVTFAIAGVAVCHRHPFDQPEAEQELADGYHIEYSGMKFGLFFVGEYIGIVTISALMVTLFFGGWHGPFLPPFIWFALKTAFFMMMFILIRASLPRPRYDQVMSFGWKVCLPLTLVNLLVTAAVILWQAQ</sequence>
<evidence type="ECO:0000255" key="1">
    <source>
        <dbReference type="HAMAP-Rule" id="MF_01350"/>
    </source>
</evidence>
<proteinExistence type="inferred from homology"/>
<protein>
    <recommendedName>
        <fullName evidence="1">NADH-quinone oxidoreductase subunit H</fullName>
        <ecNumber evidence="1">7.1.1.-</ecNumber>
    </recommendedName>
    <alternativeName>
        <fullName evidence="1">NADH dehydrogenase I subunit H</fullName>
    </alternativeName>
    <alternativeName>
        <fullName evidence="1">NDH-1 subunit H</fullName>
    </alternativeName>
</protein>
<organism>
    <name type="scientific">Enterobacter sp. (strain 638)</name>
    <dbReference type="NCBI Taxonomy" id="399742"/>
    <lineage>
        <taxon>Bacteria</taxon>
        <taxon>Pseudomonadati</taxon>
        <taxon>Pseudomonadota</taxon>
        <taxon>Gammaproteobacteria</taxon>
        <taxon>Enterobacterales</taxon>
        <taxon>Enterobacteriaceae</taxon>
        <taxon>Enterobacter</taxon>
    </lineage>
</organism>
<name>NUOH_ENT38</name>
<accession>A4WCR1</accession>
<dbReference type="EC" id="7.1.1.-" evidence="1"/>
<dbReference type="EMBL" id="CP000653">
    <property type="protein sequence ID" value="ABP61491.1"/>
    <property type="molecule type" value="Genomic_DNA"/>
</dbReference>
<dbReference type="RefSeq" id="WP_015959824.1">
    <property type="nucleotide sequence ID" value="NC_009436.1"/>
</dbReference>
<dbReference type="SMR" id="A4WCR1"/>
<dbReference type="STRING" id="399742.Ent638_2826"/>
<dbReference type="KEGG" id="ent:Ent638_2826"/>
<dbReference type="eggNOG" id="COG1005">
    <property type="taxonomic scope" value="Bacteria"/>
</dbReference>
<dbReference type="HOGENOM" id="CLU_015134_0_1_6"/>
<dbReference type="OrthoDB" id="9803734at2"/>
<dbReference type="Proteomes" id="UP000000230">
    <property type="component" value="Chromosome"/>
</dbReference>
<dbReference type="GO" id="GO:0005886">
    <property type="term" value="C:plasma membrane"/>
    <property type="evidence" value="ECO:0007669"/>
    <property type="project" value="UniProtKB-SubCell"/>
</dbReference>
<dbReference type="GO" id="GO:0003954">
    <property type="term" value="F:NADH dehydrogenase activity"/>
    <property type="evidence" value="ECO:0007669"/>
    <property type="project" value="TreeGrafter"/>
</dbReference>
<dbReference type="GO" id="GO:0016655">
    <property type="term" value="F:oxidoreductase activity, acting on NAD(P)H, quinone or similar compound as acceptor"/>
    <property type="evidence" value="ECO:0007669"/>
    <property type="project" value="UniProtKB-UniRule"/>
</dbReference>
<dbReference type="GO" id="GO:0048038">
    <property type="term" value="F:quinone binding"/>
    <property type="evidence" value="ECO:0007669"/>
    <property type="project" value="UniProtKB-KW"/>
</dbReference>
<dbReference type="GO" id="GO:0009060">
    <property type="term" value="P:aerobic respiration"/>
    <property type="evidence" value="ECO:0007669"/>
    <property type="project" value="TreeGrafter"/>
</dbReference>
<dbReference type="HAMAP" id="MF_01350">
    <property type="entry name" value="NDH1_NuoH"/>
    <property type="match status" value="1"/>
</dbReference>
<dbReference type="InterPro" id="IPR001694">
    <property type="entry name" value="NADH_UbQ_OxRdtase_su1/FPO"/>
</dbReference>
<dbReference type="InterPro" id="IPR018086">
    <property type="entry name" value="NADH_UbQ_OxRdtase_su1_CS"/>
</dbReference>
<dbReference type="NCBIfam" id="NF004740">
    <property type="entry name" value="PRK06076.1-1"/>
    <property type="match status" value="1"/>
</dbReference>
<dbReference type="NCBIfam" id="NF004741">
    <property type="entry name" value="PRK06076.1-2"/>
    <property type="match status" value="1"/>
</dbReference>
<dbReference type="PANTHER" id="PTHR11432">
    <property type="entry name" value="NADH DEHYDROGENASE SUBUNIT 1"/>
    <property type="match status" value="1"/>
</dbReference>
<dbReference type="PANTHER" id="PTHR11432:SF3">
    <property type="entry name" value="NADH-UBIQUINONE OXIDOREDUCTASE CHAIN 1"/>
    <property type="match status" value="1"/>
</dbReference>
<dbReference type="Pfam" id="PF00146">
    <property type="entry name" value="NADHdh"/>
    <property type="match status" value="1"/>
</dbReference>
<dbReference type="PROSITE" id="PS00667">
    <property type="entry name" value="COMPLEX1_ND1_1"/>
    <property type="match status" value="1"/>
</dbReference>
<dbReference type="PROSITE" id="PS00668">
    <property type="entry name" value="COMPLEX1_ND1_2"/>
    <property type="match status" value="1"/>
</dbReference>